<name>DER_SHEAM</name>
<reference key="1">
    <citation type="submission" date="2006-12" db="EMBL/GenBank/DDBJ databases">
        <title>Complete sequence of Shewanella amazonensis SB2B.</title>
        <authorList>
            <consortium name="US DOE Joint Genome Institute"/>
            <person name="Copeland A."/>
            <person name="Lucas S."/>
            <person name="Lapidus A."/>
            <person name="Barry K."/>
            <person name="Detter J.C."/>
            <person name="Glavina del Rio T."/>
            <person name="Hammon N."/>
            <person name="Israni S."/>
            <person name="Dalin E."/>
            <person name="Tice H."/>
            <person name="Pitluck S."/>
            <person name="Munk A.C."/>
            <person name="Brettin T."/>
            <person name="Bruce D."/>
            <person name="Han C."/>
            <person name="Tapia R."/>
            <person name="Gilna P."/>
            <person name="Schmutz J."/>
            <person name="Larimer F."/>
            <person name="Land M."/>
            <person name="Hauser L."/>
            <person name="Kyrpides N."/>
            <person name="Mikhailova N."/>
            <person name="Fredrickson J."/>
            <person name="Richardson P."/>
        </authorList>
    </citation>
    <scope>NUCLEOTIDE SEQUENCE [LARGE SCALE GENOMIC DNA]</scope>
    <source>
        <strain>ATCC BAA-1098 / SB2B</strain>
    </source>
</reference>
<organism>
    <name type="scientific">Shewanella amazonensis (strain ATCC BAA-1098 / SB2B)</name>
    <dbReference type="NCBI Taxonomy" id="326297"/>
    <lineage>
        <taxon>Bacteria</taxon>
        <taxon>Pseudomonadati</taxon>
        <taxon>Pseudomonadota</taxon>
        <taxon>Gammaproteobacteria</taxon>
        <taxon>Alteromonadales</taxon>
        <taxon>Shewanellaceae</taxon>
        <taxon>Shewanella</taxon>
    </lineage>
</organism>
<dbReference type="EMBL" id="CP000507">
    <property type="protein sequence ID" value="ABM00566.1"/>
    <property type="molecule type" value="Genomic_DNA"/>
</dbReference>
<dbReference type="RefSeq" id="WP_011760473.1">
    <property type="nucleotide sequence ID" value="NC_008700.1"/>
</dbReference>
<dbReference type="SMR" id="A1S859"/>
<dbReference type="STRING" id="326297.Sama_2361"/>
<dbReference type="KEGG" id="saz:Sama_2361"/>
<dbReference type="eggNOG" id="COG1160">
    <property type="taxonomic scope" value="Bacteria"/>
</dbReference>
<dbReference type="HOGENOM" id="CLU_016077_5_1_6"/>
<dbReference type="OrthoDB" id="9805918at2"/>
<dbReference type="Proteomes" id="UP000009175">
    <property type="component" value="Chromosome"/>
</dbReference>
<dbReference type="GO" id="GO:0016887">
    <property type="term" value="F:ATP hydrolysis activity"/>
    <property type="evidence" value="ECO:0007669"/>
    <property type="project" value="InterPro"/>
</dbReference>
<dbReference type="GO" id="GO:0005525">
    <property type="term" value="F:GTP binding"/>
    <property type="evidence" value="ECO:0007669"/>
    <property type="project" value="UniProtKB-UniRule"/>
</dbReference>
<dbReference type="GO" id="GO:0043022">
    <property type="term" value="F:ribosome binding"/>
    <property type="evidence" value="ECO:0007669"/>
    <property type="project" value="TreeGrafter"/>
</dbReference>
<dbReference type="GO" id="GO:0042254">
    <property type="term" value="P:ribosome biogenesis"/>
    <property type="evidence" value="ECO:0007669"/>
    <property type="project" value="UniProtKB-KW"/>
</dbReference>
<dbReference type="CDD" id="cd01894">
    <property type="entry name" value="EngA1"/>
    <property type="match status" value="1"/>
</dbReference>
<dbReference type="CDD" id="cd01895">
    <property type="entry name" value="EngA2"/>
    <property type="match status" value="1"/>
</dbReference>
<dbReference type="FunFam" id="3.30.300.20:FF:000004">
    <property type="entry name" value="GTPase Der"/>
    <property type="match status" value="1"/>
</dbReference>
<dbReference type="FunFam" id="3.40.50.300:FF:000040">
    <property type="entry name" value="GTPase Der"/>
    <property type="match status" value="1"/>
</dbReference>
<dbReference type="FunFam" id="3.40.50.300:FF:000057">
    <property type="entry name" value="GTPase Der"/>
    <property type="match status" value="1"/>
</dbReference>
<dbReference type="Gene3D" id="3.30.300.20">
    <property type="match status" value="1"/>
</dbReference>
<dbReference type="Gene3D" id="3.40.50.300">
    <property type="entry name" value="P-loop containing nucleotide triphosphate hydrolases"/>
    <property type="match status" value="2"/>
</dbReference>
<dbReference type="HAMAP" id="MF_00195">
    <property type="entry name" value="GTPase_Der"/>
    <property type="match status" value="1"/>
</dbReference>
<dbReference type="InterPro" id="IPR003593">
    <property type="entry name" value="AAA+_ATPase"/>
</dbReference>
<dbReference type="InterPro" id="IPR031166">
    <property type="entry name" value="G_ENGA"/>
</dbReference>
<dbReference type="InterPro" id="IPR006073">
    <property type="entry name" value="GTP-bd"/>
</dbReference>
<dbReference type="InterPro" id="IPR016484">
    <property type="entry name" value="GTPase_Der"/>
</dbReference>
<dbReference type="InterPro" id="IPR032859">
    <property type="entry name" value="KH_dom-like"/>
</dbReference>
<dbReference type="InterPro" id="IPR015946">
    <property type="entry name" value="KH_dom-like_a/b"/>
</dbReference>
<dbReference type="InterPro" id="IPR027417">
    <property type="entry name" value="P-loop_NTPase"/>
</dbReference>
<dbReference type="InterPro" id="IPR005225">
    <property type="entry name" value="Small_GTP-bd"/>
</dbReference>
<dbReference type="NCBIfam" id="TIGR03594">
    <property type="entry name" value="GTPase_EngA"/>
    <property type="match status" value="1"/>
</dbReference>
<dbReference type="NCBIfam" id="TIGR00231">
    <property type="entry name" value="small_GTP"/>
    <property type="match status" value="2"/>
</dbReference>
<dbReference type="PANTHER" id="PTHR43834">
    <property type="entry name" value="GTPASE DER"/>
    <property type="match status" value="1"/>
</dbReference>
<dbReference type="PANTHER" id="PTHR43834:SF6">
    <property type="entry name" value="GTPASE DER"/>
    <property type="match status" value="1"/>
</dbReference>
<dbReference type="Pfam" id="PF14714">
    <property type="entry name" value="KH_dom-like"/>
    <property type="match status" value="1"/>
</dbReference>
<dbReference type="Pfam" id="PF01926">
    <property type="entry name" value="MMR_HSR1"/>
    <property type="match status" value="2"/>
</dbReference>
<dbReference type="PIRSF" id="PIRSF006485">
    <property type="entry name" value="GTP-binding_EngA"/>
    <property type="match status" value="1"/>
</dbReference>
<dbReference type="PRINTS" id="PR00326">
    <property type="entry name" value="GTP1OBG"/>
</dbReference>
<dbReference type="SMART" id="SM00382">
    <property type="entry name" value="AAA"/>
    <property type="match status" value="2"/>
</dbReference>
<dbReference type="SUPFAM" id="SSF52540">
    <property type="entry name" value="P-loop containing nucleoside triphosphate hydrolases"/>
    <property type="match status" value="2"/>
</dbReference>
<dbReference type="PROSITE" id="PS51712">
    <property type="entry name" value="G_ENGA"/>
    <property type="match status" value="2"/>
</dbReference>
<evidence type="ECO:0000255" key="1">
    <source>
        <dbReference type="HAMAP-Rule" id="MF_00195"/>
    </source>
</evidence>
<keyword id="KW-0342">GTP-binding</keyword>
<keyword id="KW-0547">Nucleotide-binding</keyword>
<keyword id="KW-1185">Reference proteome</keyword>
<keyword id="KW-0677">Repeat</keyword>
<keyword id="KW-0690">Ribosome biogenesis</keyword>
<feature type="chain" id="PRO_1000011731" description="GTPase Der">
    <location>
        <begin position="1"/>
        <end position="488"/>
    </location>
</feature>
<feature type="domain" description="EngA-type G 1">
    <location>
        <begin position="3"/>
        <end position="166"/>
    </location>
</feature>
<feature type="domain" description="EngA-type G 2">
    <location>
        <begin position="200"/>
        <end position="373"/>
    </location>
</feature>
<feature type="domain" description="KH-like" evidence="1">
    <location>
        <begin position="374"/>
        <end position="458"/>
    </location>
</feature>
<feature type="binding site" evidence="1">
    <location>
        <begin position="9"/>
        <end position="16"/>
    </location>
    <ligand>
        <name>GTP</name>
        <dbReference type="ChEBI" id="CHEBI:37565"/>
        <label>1</label>
    </ligand>
</feature>
<feature type="binding site" evidence="1">
    <location>
        <begin position="56"/>
        <end position="60"/>
    </location>
    <ligand>
        <name>GTP</name>
        <dbReference type="ChEBI" id="CHEBI:37565"/>
        <label>1</label>
    </ligand>
</feature>
<feature type="binding site" evidence="1">
    <location>
        <begin position="118"/>
        <end position="121"/>
    </location>
    <ligand>
        <name>GTP</name>
        <dbReference type="ChEBI" id="CHEBI:37565"/>
        <label>1</label>
    </ligand>
</feature>
<feature type="binding site" evidence="1">
    <location>
        <begin position="206"/>
        <end position="213"/>
    </location>
    <ligand>
        <name>GTP</name>
        <dbReference type="ChEBI" id="CHEBI:37565"/>
        <label>2</label>
    </ligand>
</feature>
<feature type="binding site" evidence="1">
    <location>
        <begin position="253"/>
        <end position="257"/>
    </location>
    <ligand>
        <name>GTP</name>
        <dbReference type="ChEBI" id="CHEBI:37565"/>
        <label>2</label>
    </ligand>
</feature>
<feature type="binding site" evidence="1">
    <location>
        <begin position="318"/>
        <end position="321"/>
    </location>
    <ligand>
        <name>GTP</name>
        <dbReference type="ChEBI" id="CHEBI:37565"/>
        <label>2</label>
    </ligand>
</feature>
<proteinExistence type="inferred from homology"/>
<accession>A1S859</accession>
<comment type="function">
    <text evidence="1">GTPase that plays an essential role in the late steps of ribosome biogenesis.</text>
</comment>
<comment type="subunit">
    <text evidence="1">Associates with the 50S ribosomal subunit.</text>
</comment>
<comment type="similarity">
    <text evidence="1">Belongs to the TRAFAC class TrmE-Era-EngA-EngB-Septin-like GTPase superfamily. EngA (Der) GTPase family.</text>
</comment>
<gene>
    <name evidence="1" type="primary">der</name>
    <name type="synonym">engA</name>
    <name type="ordered locus">Sama_2361</name>
</gene>
<sequence>MIPVVALVGRPNVGKSTLFNRLTRTRDALVADYPGLTRDRKYGRAHLSGYEFIVVDTGGIDGTEEGIETKMAEQSLAAIEEADVVLFMTDARAGLTAADLAIAQHLRSRDKITFVVANKVDGIDADSACGEFWQLGLGEVYQMAAAQGRGVTGLVEYALAPFAEAMGLVRDDDGEVVTDERNYTEEEAEAEQQRLAEQPIKLAIIGKPNVGKSTLTNRILGEERVVVYDQPGTTRDSVYIPMERDGRNYVLIDTAGVRRRARVHEVIEKFSVIKTLKAVEDSNVVLLVIDAHEGIAEQDLGLLGFVLNSGRALVLAVNKWDGLDQDVKDRVKTELDRRLGFIDFARIHFISALHGTGVGHLFESIEEAYDSATRRVSTSMLTRIMQMAQDDHQPPMVNGRRVKLKYAHVGGYNPPIVVVHGNQVSRLPDSYKRYMMNYYRRALKVVGTPIQLRFHEGDNPFEGRKEKLTLSQERRRKRMMSHIKSKKA</sequence>
<protein>
    <recommendedName>
        <fullName evidence="1">GTPase Der</fullName>
    </recommendedName>
    <alternativeName>
        <fullName evidence="1">GTP-binding protein EngA</fullName>
    </alternativeName>
</protein>